<dbReference type="EMBL" id="DS027690">
    <property type="protein sequence ID" value="EAW21931.1"/>
    <property type="molecule type" value="Genomic_DNA"/>
</dbReference>
<dbReference type="RefSeq" id="XP_001263828.1">
    <property type="nucleotide sequence ID" value="XM_001263827.1"/>
</dbReference>
<dbReference type="STRING" id="331117.A1D887"/>
<dbReference type="EnsemblFungi" id="EAW21931">
    <property type="protein sequence ID" value="EAW21931"/>
    <property type="gene ID" value="NFIA_071020"/>
</dbReference>
<dbReference type="GeneID" id="4590474"/>
<dbReference type="KEGG" id="nfi:NFIA_071020"/>
<dbReference type="VEuPathDB" id="FungiDB:NFIA_071020"/>
<dbReference type="eggNOG" id="KOG4522">
    <property type="taxonomic scope" value="Eukaryota"/>
</dbReference>
<dbReference type="HOGENOM" id="CLU_002034_1_0_1"/>
<dbReference type="OMA" id="YPVRPWE"/>
<dbReference type="OrthoDB" id="20828at2759"/>
<dbReference type="Proteomes" id="UP000006702">
    <property type="component" value="Unassembled WGS sequence"/>
</dbReference>
<dbReference type="GO" id="GO:0016592">
    <property type="term" value="C:mediator complex"/>
    <property type="evidence" value="ECO:0007669"/>
    <property type="project" value="InterPro"/>
</dbReference>
<dbReference type="GO" id="GO:0003712">
    <property type="term" value="F:transcription coregulator activity"/>
    <property type="evidence" value="ECO:0007669"/>
    <property type="project" value="InterPro"/>
</dbReference>
<dbReference type="GO" id="GO:0006357">
    <property type="term" value="P:regulation of transcription by RNA polymerase II"/>
    <property type="evidence" value="ECO:0007669"/>
    <property type="project" value="InterPro"/>
</dbReference>
<dbReference type="InterPro" id="IPR019035">
    <property type="entry name" value="Mediator_Med12"/>
</dbReference>
<dbReference type="PANTHER" id="PTHR46567">
    <property type="entry name" value="MEDIATOR OF RNA POLYMERASE II TRANSCRIPTION SUBUNIT 12"/>
    <property type="match status" value="1"/>
</dbReference>
<dbReference type="PANTHER" id="PTHR46567:SF1">
    <property type="entry name" value="MEDIATOR OF RNA POLYMERASE II TRANSCRIPTION SUBUNIT 12"/>
    <property type="match status" value="1"/>
</dbReference>
<dbReference type="Pfam" id="PF25326">
    <property type="entry name" value="ARM_SRB8"/>
    <property type="match status" value="1"/>
</dbReference>
<dbReference type="Pfam" id="PF09497">
    <property type="entry name" value="Med12"/>
    <property type="match status" value="1"/>
</dbReference>
<dbReference type="SMART" id="SM01281">
    <property type="entry name" value="Med12"/>
    <property type="match status" value="1"/>
</dbReference>
<sequence>MIPHSSAGVQSWGQPLHAVYSGTGRADLSQPLGQPDRQPEQPSMPVPQLQGRPPALIDLTTNDGDVLEREPPAKRLKIDVHAGSVAGDGSPASAGVGESKSTPSATTSKPPSLSWRARPVWSFQALLSEVSGSAEINGESAAGVVQDVKPPPPPSFPGPPWKFAPADTIASDSAGAQDGAPSKEVQTTPYHIETPSVAPVIRGEKVADFSPWMGNHPEDVLNEQTAKQGYYDRTQVSQNESNTARPSLYAQLKHRSGLQILSSVFAAALEKRQGHNMVTAPSTFKPPPRVTLTDNKREAWLRDLANPNVPLRKLSRTIPHGIRGRVLLDQCLTKWVPVGRAVWLAKCVGANEIRAFKRKGTSGALAIGLEAKWVRDWTANVQQFLEGVITSCGVADWKMKMTYAVSLTARLFFEQLLDHDQYLGWFLTSLEAAPFNTLPVWLLMLGIYWSNILRYRKRGRRLAELLLDKLQVAIKSDSATSLRPLTDRLSLHIRKLTLEHTSSMVLPQSWEKYKDLLSSCLDLNDNVHRAVFQNLAERNARVQRPRKCEETTQQPPQQRVIQLFDSIGSSNDITSVSAASLGAIDDKAALVLKLLEWAATPFRYGVSRVYTGARLLRKWKIAGVDVDTSIISFLGESQMRDQLNMDNIYHIVSELVRSQTFSVGKYLQWLMAKGVADFPQNSDHQPLSGDLALLMQLPVSRLPEHVHNLRNTLLHRAGVEVSKESSTIAILKASIAERLPRIFGSVATSAVSRDPLPSDLTWAVKSELGQWIRRGVTEFGRDPRRAFQDLHSAPSAEHFALTPGEFYTVRDILESFGDLSILADVLKQATVCNDGIVLASAADTVNYHFRSFCVIGATTDLFKRLVESYARLKRLGSTSLDLIFSLIDLGLRLPGELNTVALLRQDLSRIESKSSMAAPSPLSDHIPSSFNETDPLFLLKLDQLLSSASGIDESTLDTIFNLLIKQIESSGGHAKLSVNETCRYLSYLRPFHPKRFDIMIVRWICGLLRSTTGGILSQVLPPLIGVGCVTIQAFVFLVRRLLKSENMMSNQRDLRIDLLQLLVPPPAGQSRYFDMVTYRFHLSRKEFLFKHPEEVFDIIRDAIALIDSQSQEGNYRQVDLGHSAMVLLQILLTKNPESAVKHCTEKLIGQHPSAVTVLTRALDSLLGLDTKAGERLFTSNGSFIFITIDTGPAAPDISVAEKVIELTNDFSLPFCRLKLQLLFNAETKGDVRNEIVDVMFKAAVADSRSRRSNWVGLVRLMSHDAVRQIRERAEKNFFAIPLFEESPDGCSSFAADNSSSLETAKLYLAIIEKLAYSIPDVGPQAVVPVLTEKMDLLLQRLITMQANYSGTTELSHGVDAEHMIRSRTQFERALAFWFSALLRMIVLHRTAFSVPSAAVRPSALPEQTRLLISIFCITLARLPDSVLRLFPAADYFPHSMTAGDCRPCPGILLQTHALDVAASLIDTFPDEARHQCARYLREKCPPFARVQNDSRFLYLLGPLGDSPSSNITLPVSIPSPAASGSTPAPTPSGNPTGGFSHPQQPAFVSGVPTGLPDGLNCAASHLCLQYRGRAIGAYPVRPWELLEDAAPIAGTNDTAVSLGYFDARRVRV</sequence>
<organism>
    <name type="scientific">Neosartorya fischeri (strain ATCC 1020 / DSM 3700 / CBS 544.65 / FGSC A1164 / JCM 1740 / NRRL 181 / WB 181)</name>
    <name type="common">Aspergillus fischerianus</name>
    <dbReference type="NCBI Taxonomy" id="331117"/>
    <lineage>
        <taxon>Eukaryota</taxon>
        <taxon>Fungi</taxon>
        <taxon>Dikarya</taxon>
        <taxon>Ascomycota</taxon>
        <taxon>Pezizomycotina</taxon>
        <taxon>Eurotiomycetes</taxon>
        <taxon>Eurotiomycetidae</taxon>
        <taxon>Eurotiales</taxon>
        <taxon>Aspergillaceae</taxon>
        <taxon>Aspergillus</taxon>
        <taxon>Aspergillus subgen. Fumigati</taxon>
    </lineage>
</organism>
<proteinExistence type="inferred from homology"/>
<protein>
    <recommendedName>
        <fullName>Mediator of RNA polymerase II transcription subunit 12</fullName>
    </recommendedName>
    <alternativeName>
        <fullName>Mediator complex subunit 12</fullName>
    </alternativeName>
</protein>
<feature type="chain" id="PRO_0000312974" description="Mediator of RNA polymerase II transcription subunit 12">
    <location>
        <begin position="1"/>
        <end position="1612"/>
    </location>
</feature>
<feature type="region of interest" description="Disordered" evidence="2">
    <location>
        <begin position="18"/>
        <end position="114"/>
    </location>
</feature>
<feature type="region of interest" description="Disordered" evidence="2">
    <location>
        <begin position="1514"/>
        <end position="1547"/>
    </location>
</feature>
<feature type="compositionally biased region" description="Basic and acidic residues" evidence="2">
    <location>
        <begin position="66"/>
        <end position="80"/>
    </location>
</feature>
<feature type="compositionally biased region" description="Low complexity" evidence="2">
    <location>
        <begin position="99"/>
        <end position="114"/>
    </location>
</feature>
<feature type="compositionally biased region" description="Low complexity" evidence="2">
    <location>
        <begin position="1518"/>
        <end position="1538"/>
    </location>
</feature>
<reference key="1">
    <citation type="journal article" date="2008" name="PLoS Genet.">
        <title>Genomic islands in the pathogenic filamentous fungus Aspergillus fumigatus.</title>
        <authorList>
            <person name="Fedorova N.D."/>
            <person name="Khaldi N."/>
            <person name="Joardar V.S."/>
            <person name="Maiti R."/>
            <person name="Amedeo P."/>
            <person name="Anderson M.J."/>
            <person name="Crabtree J."/>
            <person name="Silva J.C."/>
            <person name="Badger J.H."/>
            <person name="Albarraq A."/>
            <person name="Angiuoli S."/>
            <person name="Bussey H."/>
            <person name="Bowyer P."/>
            <person name="Cotty P.J."/>
            <person name="Dyer P.S."/>
            <person name="Egan A."/>
            <person name="Galens K."/>
            <person name="Fraser-Liggett C.M."/>
            <person name="Haas B.J."/>
            <person name="Inman J.M."/>
            <person name="Kent R."/>
            <person name="Lemieux S."/>
            <person name="Malavazi I."/>
            <person name="Orvis J."/>
            <person name="Roemer T."/>
            <person name="Ronning C.M."/>
            <person name="Sundaram J.P."/>
            <person name="Sutton G."/>
            <person name="Turner G."/>
            <person name="Venter J.C."/>
            <person name="White O.R."/>
            <person name="Whitty B.R."/>
            <person name="Youngman P."/>
            <person name="Wolfe K.H."/>
            <person name="Goldman G.H."/>
            <person name="Wortman J.R."/>
            <person name="Jiang B."/>
            <person name="Denning D.W."/>
            <person name="Nierman W.C."/>
        </authorList>
    </citation>
    <scope>NUCLEOTIDE SEQUENCE [LARGE SCALE GENOMIC DNA]</scope>
    <source>
        <strain>ATCC 1020 / DSM 3700 / CBS 544.65 / FGSC A1164 / JCM 1740 / NRRL 181 / WB 181</strain>
    </source>
</reference>
<gene>
    <name type="primary">srb8</name>
    <name type="synonym">med12</name>
    <name type="ORF">NFIA_071020</name>
</gene>
<comment type="function">
    <text evidence="1">Component of the srb8-11 complex. The srb8-11 complex is a regulatory module of the Mediator complex which is itself involved in regulation of basal and activated RNA polymerase II-dependent transcription. The srb8-11 complex may be involved in the transcriptional repression of a subset of genes regulated by Mediator. It may inhibit the association of the Mediator complex with RNA polymerase II to form the holoenzyme complex (By similarity).</text>
</comment>
<comment type="subunit">
    <text evidence="1">Component of the srb8-11 complex, which itself associates with the Mediator complex.</text>
</comment>
<comment type="subcellular location">
    <subcellularLocation>
        <location evidence="3">Nucleus</location>
    </subcellularLocation>
</comment>
<comment type="similarity">
    <text evidence="3">Belongs to the Mediator complex subunit 12 family.</text>
</comment>
<name>SRB8_NEOFI</name>
<keyword id="KW-0010">Activator</keyword>
<keyword id="KW-0539">Nucleus</keyword>
<keyword id="KW-1185">Reference proteome</keyword>
<keyword id="KW-0678">Repressor</keyword>
<keyword id="KW-0804">Transcription</keyword>
<keyword id="KW-0805">Transcription regulation</keyword>
<evidence type="ECO:0000250" key="1"/>
<evidence type="ECO:0000256" key="2">
    <source>
        <dbReference type="SAM" id="MobiDB-lite"/>
    </source>
</evidence>
<evidence type="ECO:0000305" key="3"/>
<accession>A1D887</accession>